<accession>P0C1Q6</accession>
<accession>S4S3F8</accession>
<evidence type="ECO:0000250" key="1">
    <source>
        <dbReference type="UniProtKB" id="P01514"/>
    </source>
</evidence>
<evidence type="ECO:0000250" key="2">
    <source>
        <dbReference type="UniProtKB" id="P84914"/>
    </source>
</evidence>
<evidence type="ECO:0000255" key="3"/>
<evidence type="ECO:0000269" key="4">
    <source>
    </source>
</evidence>
<evidence type="ECO:0000303" key="5">
    <source>
    </source>
</evidence>
<evidence type="ECO:0000305" key="6"/>
<evidence type="ECO:0000305" key="7">
    <source>
    </source>
</evidence>
<evidence type="ECO:0000312" key="8">
    <source>
        <dbReference type="EMBL" id="AEM43049.1"/>
    </source>
</evidence>
<dbReference type="EMBL" id="HQ168021">
    <property type="protein sequence ID" value="AEM43049.1"/>
    <property type="molecule type" value="mRNA"/>
</dbReference>
<dbReference type="GO" id="GO:0005576">
    <property type="term" value="C:extracellular region"/>
    <property type="evidence" value="ECO:0007669"/>
    <property type="project" value="UniProtKB-SubCell"/>
</dbReference>
<dbReference type="GO" id="GO:0016020">
    <property type="term" value="C:membrane"/>
    <property type="evidence" value="ECO:0007669"/>
    <property type="project" value="UniProtKB-KW"/>
</dbReference>
<dbReference type="GO" id="GO:0044218">
    <property type="term" value="C:other organism cell membrane"/>
    <property type="evidence" value="ECO:0007669"/>
    <property type="project" value="UniProtKB-KW"/>
</dbReference>
<dbReference type="GO" id="GO:0090729">
    <property type="term" value="F:toxin activity"/>
    <property type="evidence" value="ECO:0007669"/>
    <property type="project" value="UniProtKB-KW"/>
</dbReference>
<dbReference type="GO" id="GO:0006935">
    <property type="term" value="P:chemotaxis"/>
    <property type="evidence" value="ECO:0007669"/>
    <property type="project" value="UniProtKB-KW"/>
</dbReference>
<dbReference type="GO" id="GO:0042742">
    <property type="term" value="P:defense response to bacterium"/>
    <property type="evidence" value="ECO:0007669"/>
    <property type="project" value="UniProtKB-KW"/>
</dbReference>
<dbReference type="GO" id="GO:0045087">
    <property type="term" value="P:innate immune response"/>
    <property type="evidence" value="ECO:0007669"/>
    <property type="project" value="UniProtKB-KW"/>
</dbReference>
<protein>
    <recommendedName>
        <fullName evidence="5">Mastoparan-A</fullName>
        <shortName evidence="5">MP-A</shortName>
    </recommendedName>
</protein>
<sequence>MKNTILILFTAFIALLGFFGMSAEALADPIADPLAGPNAEADPEAIKWKAILDAVKKVIG</sequence>
<feature type="signal peptide" evidence="3">
    <location>
        <begin position="1"/>
        <end position="27"/>
    </location>
</feature>
<feature type="propeptide" id="PRO_0000458818" evidence="7">
    <location>
        <begin position="28"/>
        <end position="45"/>
    </location>
</feature>
<feature type="peptide" id="PRO_0000247265" description="Mastoparan-A" evidence="7">
    <location>
        <begin position="46"/>
        <end position="59"/>
    </location>
</feature>
<feature type="repeat" description="AXPX 1" evidence="6">
    <location>
        <begin position="27"/>
        <end position="30"/>
    </location>
</feature>
<feature type="repeat" description="AXPX 2" evidence="6">
    <location>
        <begin position="31"/>
        <end position="34"/>
    </location>
</feature>
<feature type="repeat" description="AXPX 3" evidence="6">
    <location>
        <begin position="35"/>
        <end position="38"/>
    </location>
</feature>
<feature type="repeat" description="AXPX 4" evidence="6">
    <location>
        <begin position="41"/>
        <end position="43"/>
    </location>
</feature>
<feature type="modified residue" description="Isoleucine amide" evidence="7">
    <location>
        <position position="59"/>
    </location>
</feature>
<name>MAST_VESAN</name>
<proteinExistence type="evidence at protein level"/>
<keyword id="KW-0027">Amidation</keyword>
<keyword id="KW-0044">Antibiotic</keyword>
<keyword id="KW-0929">Antimicrobial</keyword>
<keyword id="KW-0145">Chemotaxis</keyword>
<keyword id="KW-1213">G-protein coupled receptor impairing toxin</keyword>
<keyword id="KW-0391">Immunity</keyword>
<keyword id="KW-0399">Innate immunity</keyword>
<keyword id="KW-0467">Mast cell degranulation</keyword>
<keyword id="KW-0472">Membrane</keyword>
<keyword id="KW-0677">Repeat</keyword>
<keyword id="KW-0964">Secreted</keyword>
<keyword id="KW-0732">Signal</keyword>
<keyword id="KW-1052">Target cell membrane</keyword>
<keyword id="KW-1053">Target membrane</keyword>
<keyword id="KW-0800">Toxin</keyword>
<reference evidence="8" key="1">
    <citation type="journal article" date="2011" name="Peptides">
        <title>Structural and biological characterization of mastoparans in the venom of Vespa species in Taiwan.</title>
        <authorList>
            <person name="Lin C.H."/>
            <person name="Tzen J.T."/>
            <person name="Shyu C.L."/>
            <person name="Yang M.J."/>
            <person name="Tu W.C."/>
        </authorList>
    </citation>
    <scope>NUCLEOTIDE SEQUENCE [MRNA]</scope>
    <scope>FUNCTION</scope>
    <scope>PROBABLE AMIDATION AT ILE-59</scope>
    <scope>SYNTHESIS OF 46-59</scope>
    <source>
        <tissue>Venom gland</tissue>
    </source>
</reference>
<organism>
    <name type="scientific">Vespa analis</name>
    <name type="common">Yellow-vented hornet</name>
    <dbReference type="NCBI Taxonomy" id="7449"/>
    <lineage>
        <taxon>Eukaryota</taxon>
        <taxon>Metazoa</taxon>
        <taxon>Ecdysozoa</taxon>
        <taxon>Arthropoda</taxon>
        <taxon>Hexapoda</taxon>
        <taxon>Insecta</taxon>
        <taxon>Pterygota</taxon>
        <taxon>Neoptera</taxon>
        <taxon>Endopterygota</taxon>
        <taxon>Hymenoptera</taxon>
        <taxon>Apocrita</taxon>
        <taxon>Aculeata</taxon>
        <taxon>Vespoidea</taxon>
        <taxon>Vespidae</taxon>
        <taxon>Vespinae</taxon>
        <taxon>Vespa</taxon>
    </lineage>
</organism>
<comment type="function">
    <text evidence="1 2 4">Antimicrobial and mast cell degranulating peptide. Has broad spectrum antibacterial activity against both Gram-positive and Gram-negative bacteria (S.aureus MIC=32-64 ug/ml, S.xylosus MIC=2 ug/ml, S.alactolyticus MIC=12 ug/ml, C.koseri MIC=4 ug/ml, E.coli MIC=8 ug/ml, K.pneumoniae MIC=32 ug/ml, P.aerugiosa MIC=192 ug/ml, S.choleraesuis MIC=32 ug/ml, S.typhimurium MIC=32 ug/ml, V.parahamelytics MIC=16 ug/ml). Affects membrane permeability of E.coli. Shows hemolytic activities on sheep, chicken and human erythrocytes (PubMed:21884742). Its mast cell degranulation activity may be related to the activation of G-protein coupled receptors in mast cells as well as interaction with other proteins located in cell endosomal membranes in the mast cells (By similarity).</text>
</comment>
<comment type="subcellular location">
    <subcellularLocation>
        <location evidence="7">Secreted</location>
    </subcellularLocation>
    <subcellularLocation>
        <location evidence="6">Target cell membrane</location>
    </subcellularLocation>
    <text evidence="7">Assumes an amphipathic alpha-helical conformation in a membrane-like environment.</text>
</comment>
<comment type="tissue specificity">
    <text evidence="7">Expressed by the venom gland.</text>
</comment>
<comment type="similarity">
    <text evidence="6">Belongs to the MCD family. Mastoparan subfamily.</text>
</comment>